<proteinExistence type="inferred from homology"/>
<feature type="chain" id="PRO_1000083813" description="ATP synthase gamma chain">
    <location>
        <begin position="1"/>
        <end position="288"/>
    </location>
</feature>
<protein>
    <recommendedName>
        <fullName evidence="1">ATP synthase gamma chain</fullName>
    </recommendedName>
    <alternativeName>
        <fullName evidence="1">ATP synthase F1 sector gamma subunit</fullName>
    </alternativeName>
    <alternativeName>
        <fullName evidence="1">F-ATPase gamma subunit</fullName>
    </alternativeName>
</protein>
<gene>
    <name evidence="1" type="primary">atpG</name>
    <name type="ordered locus">SaurJH1_2178</name>
</gene>
<organism>
    <name type="scientific">Staphylococcus aureus (strain JH1)</name>
    <dbReference type="NCBI Taxonomy" id="359787"/>
    <lineage>
        <taxon>Bacteria</taxon>
        <taxon>Bacillati</taxon>
        <taxon>Bacillota</taxon>
        <taxon>Bacilli</taxon>
        <taxon>Bacillales</taxon>
        <taxon>Staphylococcaceae</taxon>
        <taxon>Staphylococcus</taxon>
    </lineage>
</organism>
<name>ATPG_STAA2</name>
<evidence type="ECO:0000255" key="1">
    <source>
        <dbReference type="HAMAP-Rule" id="MF_00815"/>
    </source>
</evidence>
<reference key="1">
    <citation type="submission" date="2007-06" db="EMBL/GenBank/DDBJ databases">
        <title>Complete sequence of chromosome of Staphylococcus aureus subsp. aureus JH1.</title>
        <authorList>
            <consortium name="US DOE Joint Genome Institute"/>
            <person name="Copeland A."/>
            <person name="Lucas S."/>
            <person name="Lapidus A."/>
            <person name="Barry K."/>
            <person name="Detter J.C."/>
            <person name="Glavina del Rio T."/>
            <person name="Hammon N."/>
            <person name="Israni S."/>
            <person name="Dalin E."/>
            <person name="Tice H."/>
            <person name="Pitluck S."/>
            <person name="Chain P."/>
            <person name="Malfatti S."/>
            <person name="Shin M."/>
            <person name="Vergez L."/>
            <person name="Schmutz J."/>
            <person name="Larimer F."/>
            <person name="Land M."/>
            <person name="Hauser L."/>
            <person name="Kyrpides N."/>
            <person name="Ivanova N."/>
            <person name="Tomasz A."/>
            <person name="Richardson P."/>
        </authorList>
    </citation>
    <scope>NUCLEOTIDE SEQUENCE [LARGE SCALE GENOMIC DNA]</scope>
    <source>
        <strain>JH1</strain>
    </source>
</reference>
<sequence>MASLKEIDTRIKSTKKMKQITKAMNMVSSSKLRRAEKNTKQFTPYMDKMQDAITAVAGASSNTNHPMLRPRKITRSGYLVITSDKGLAGAYSANVLKKLITDIEAKHQDSSEYSIVVLGQQGVDFLKNRGYDIEYSQVDVPDQPSFKSVQALANHAIDLYSEEEIDELNIYYSHYVSVLENKPTSRQVLPLSQEDSSKGHGHLSSYEFEPDKESILSVILPQYVESLIYGTILDAKASEHATRMTAMKNATDNATELIDDLSLEYNRARQAEITQQITEIVGGSAALE</sequence>
<keyword id="KW-0066">ATP synthesis</keyword>
<keyword id="KW-1003">Cell membrane</keyword>
<keyword id="KW-0139">CF(1)</keyword>
<keyword id="KW-0375">Hydrogen ion transport</keyword>
<keyword id="KW-0406">Ion transport</keyword>
<keyword id="KW-0472">Membrane</keyword>
<keyword id="KW-0813">Transport</keyword>
<dbReference type="EMBL" id="CP000736">
    <property type="protein sequence ID" value="ABR53007.1"/>
    <property type="molecule type" value="Genomic_DNA"/>
</dbReference>
<dbReference type="SMR" id="A6U3I9"/>
<dbReference type="KEGG" id="sah:SaurJH1_2178"/>
<dbReference type="HOGENOM" id="CLU_050669_0_1_9"/>
<dbReference type="GO" id="GO:0005886">
    <property type="term" value="C:plasma membrane"/>
    <property type="evidence" value="ECO:0007669"/>
    <property type="project" value="UniProtKB-SubCell"/>
</dbReference>
<dbReference type="GO" id="GO:0045259">
    <property type="term" value="C:proton-transporting ATP synthase complex"/>
    <property type="evidence" value="ECO:0007669"/>
    <property type="project" value="UniProtKB-KW"/>
</dbReference>
<dbReference type="GO" id="GO:0005524">
    <property type="term" value="F:ATP binding"/>
    <property type="evidence" value="ECO:0007669"/>
    <property type="project" value="UniProtKB-UniRule"/>
</dbReference>
<dbReference type="GO" id="GO:0046933">
    <property type="term" value="F:proton-transporting ATP synthase activity, rotational mechanism"/>
    <property type="evidence" value="ECO:0007669"/>
    <property type="project" value="UniProtKB-UniRule"/>
</dbReference>
<dbReference type="GO" id="GO:0042777">
    <property type="term" value="P:proton motive force-driven plasma membrane ATP synthesis"/>
    <property type="evidence" value="ECO:0007669"/>
    <property type="project" value="UniProtKB-UniRule"/>
</dbReference>
<dbReference type="CDD" id="cd12151">
    <property type="entry name" value="F1-ATPase_gamma"/>
    <property type="match status" value="1"/>
</dbReference>
<dbReference type="FunFam" id="1.10.287.80:FF:000019">
    <property type="entry name" value="ATP synthase gamma chain"/>
    <property type="match status" value="1"/>
</dbReference>
<dbReference type="FunFam" id="3.40.1380.10:FF:000002">
    <property type="entry name" value="ATP synthase gamma chain"/>
    <property type="match status" value="1"/>
</dbReference>
<dbReference type="Gene3D" id="3.40.1380.10">
    <property type="match status" value="1"/>
</dbReference>
<dbReference type="Gene3D" id="1.10.287.80">
    <property type="entry name" value="ATP synthase, gamma subunit, helix hairpin domain"/>
    <property type="match status" value="1"/>
</dbReference>
<dbReference type="HAMAP" id="MF_00815">
    <property type="entry name" value="ATP_synth_gamma_bact"/>
    <property type="match status" value="1"/>
</dbReference>
<dbReference type="InterPro" id="IPR035968">
    <property type="entry name" value="ATP_synth_F1_ATPase_gsu"/>
</dbReference>
<dbReference type="InterPro" id="IPR000131">
    <property type="entry name" value="ATP_synth_F1_gsu"/>
</dbReference>
<dbReference type="NCBIfam" id="TIGR01146">
    <property type="entry name" value="ATPsyn_F1gamma"/>
    <property type="match status" value="1"/>
</dbReference>
<dbReference type="PANTHER" id="PTHR11693">
    <property type="entry name" value="ATP SYNTHASE GAMMA CHAIN"/>
    <property type="match status" value="1"/>
</dbReference>
<dbReference type="PANTHER" id="PTHR11693:SF22">
    <property type="entry name" value="ATP SYNTHASE SUBUNIT GAMMA, MITOCHONDRIAL"/>
    <property type="match status" value="1"/>
</dbReference>
<dbReference type="Pfam" id="PF00231">
    <property type="entry name" value="ATP-synt"/>
    <property type="match status" value="1"/>
</dbReference>
<dbReference type="PRINTS" id="PR00126">
    <property type="entry name" value="ATPASEGAMMA"/>
</dbReference>
<dbReference type="SUPFAM" id="SSF52943">
    <property type="entry name" value="ATP synthase (F1-ATPase), gamma subunit"/>
    <property type="match status" value="1"/>
</dbReference>
<accession>A6U3I9</accession>
<comment type="function">
    <text evidence="1">Produces ATP from ADP in the presence of a proton gradient across the membrane. The gamma chain is believed to be important in regulating ATPase activity and the flow of protons through the CF(0) complex.</text>
</comment>
<comment type="subunit">
    <text evidence="1">F-type ATPases have 2 components, CF(1) - the catalytic core - and CF(0) - the membrane proton channel. CF(1) has five subunits: alpha(3), beta(3), gamma(1), delta(1), epsilon(1). CF(0) has three main subunits: a, b and c.</text>
</comment>
<comment type="subcellular location">
    <subcellularLocation>
        <location evidence="1">Cell membrane</location>
        <topology evidence="1">Peripheral membrane protein</topology>
    </subcellularLocation>
</comment>
<comment type="similarity">
    <text evidence="1">Belongs to the ATPase gamma chain family.</text>
</comment>